<comment type="catalytic activity">
    <reaction>
        <text>L-histidinol phosphate + 2-oxoglutarate = 3-(imidazol-4-yl)-2-oxopropyl phosphate + L-glutamate</text>
        <dbReference type="Rhea" id="RHEA:23744"/>
        <dbReference type="ChEBI" id="CHEBI:16810"/>
        <dbReference type="ChEBI" id="CHEBI:29985"/>
        <dbReference type="ChEBI" id="CHEBI:57766"/>
        <dbReference type="ChEBI" id="CHEBI:57980"/>
        <dbReference type="EC" id="2.6.1.9"/>
    </reaction>
</comment>
<comment type="cofactor">
    <cofactor evidence="1">
        <name>pyridoxal 5'-phosphate</name>
        <dbReference type="ChEBI" id="CHEBI:597326"/>
    </cofactor>
</comment>
<comment type="pathway">
    <text>Amino-acid biosynthesis; L-histidine biosynthesis; L-histidine from 5-phospho-alpha-D-ribose 1-diphosphate: step 7/9.</text>
</comment>
<comment type="subunit">
    <text evidence="1">Homodimer.</text>
</comment>
<comment type="similarity">
    <text evidence="2">Belongs to the class-II pyridoxal-phosphate-dependent aminotransferase family. Histidinol-phosphate aminotransferase subfamily.</text>
</comment>
<gene>
    <name type="primary">hisC2</name>
    <name type="ordered locus">bll1397</name>
</gene>
<sequence>MSCPVPNPGILDIAPYTPGKSPVPEPGRKVFKLSANETPFGPSPKAIEAFKKVADHLEDYPEGTSRVLREAIGRTFGLDPNRIICGAGSDEILNLLAHTYLGQGDEAISTTHGFLVYPIATMAVGARNVIAQEKNLTCDVDAILKAVTPKTKLVWLANPNNPTGTYIPFDEVKRLRAGLPSHVLLVLDAAYCDYVSRNDYEMGIELVATTENTVVTHTFSKIHGLAALRIGWMFGPEHIIDAVNRIRGPFNVSTPAMYAAVAAIEDTAHQAMSKQFTETWRNWLTEEIGKLGLKVTPSVANFVLIHFPTDRGRTSDDADAFLTKRGLVLRALKNYGLPHSLRMTIGTEEANRLVVDGLRDFMAGK</sequence>
<reference key="1">
    <citation type="journal article" date="2002" name="DNA Res.">
        <title>Complete genomic sequence of nitrogen-fixing symbiotic bacterium Bradyrhizobium japonicum USDA110.</title>
        <authorList>
            <person name="Kaneko T."/>
            <person name="Nakamura Y."/>
            <person name="Sato S."/>
            <person name="Minamisawa K."/>
            <person name="Uchiumi T."/>
            <person name="Sasamoto S."/>
            <person name="Watanabe A."/>
            <person name="Idesawa K."/>
            <person name="Iriguchi M."/>
            <person name="Kawashima K."/>
            <person name="Kohara M."/>
            <person name="Matsumoto M."/>
            <person name="Shimpo S."/>
            <person name="Tsuruoka H."/>
            <person name="Wada T."/>
            <person name="Yamada M."/>
            <person name="Tabata S."/>
        </authorList>
    </citation>
    <scope>NUCLEOTIDE SEQUENCE [LARGE SCALE GENOMIC DNA]</scope>
    <source>
        <strain>JCM 10833 / BCRC 13528 / IAM 13628 / NBRC 14792 / USDA 110</strain>
    </source>
</reference>
<feature type="chain" id="PRO_0000153326" description="Histidinol-phosphate aminotransferase 2">
    <location>
        <begin position="1"/>
        <end position="365"/>
    </location>
</feature>
<feature type="modified residue" description="N6-(pyridoxal phosphate)lysine" evidence="1">
    <location>
        <position position="221"/>
    </location>
</feature>
<name>HIS82_BRADU</name>
<accession>Q89UL9</accession>
<proteinExistence type="inferred from homology"/>
<keyword id="KW-0028">Amino-acid biosynthesis</keyword>
<keyword id="KW-0032">Aminotransferase</keyword>
<keyword id="KW-0368">Histidine biosynthesis</keyword>
<keyword id="KW-0663">Pyridoxal phosphate</keyword>
<keyword id="KW-1185">Reference proteome</keyword>
<keyword id="KW-0808">Transferase</keyword>
<organism>
    <name type="scientific">Bradyrhizobium diazoefficiens (strain JCM 10833 / BCRC 13528 / IAM 13628 / NBRC 14792 / USDA 110)</name>
    <dbReference type="NCBI Taxonomy" id="224911"/>
    <lineage>
        <taxon>Bacteria</taxon>
        <taxon>Pseudomonadati</taxon>
        <taxon>Pseudomonadota</taxon>
        <taxon>Alphaproteobacteria</taxon>
        <taxon>Hyphomicrobiales</taxon>
        <taxon>Nitrobacteraceae</taxon>
        <taxon>Bradyrhizobium</taxon>
    </lineage>
</organism>
<dbReference type="EC" id="2.6.1.9"/>
<dbReference type="EMBL" id="BA000040">
    <property type="protein sequence ID" value="BAC46662.1"/>
    <property type="molecule type" value="Genomic_DNA"/>
</dbReference>
<dbReference type="RefSeq" id="NP_768037.1">
    <property type="nucleotide sequence ID" value="NC_004463.1"/>
</dbReference>
<dbReference type="RefSeq" id="WP_011084214.1">
    <property type="nucleotide sequence ID" value="NC_004463.1"/>
</dbReference>
<dbReference type="SMR" id="Q89UL9"/>
<dbReference type="FunCoup" id="Q89UL9">
    <property type="interactions" value="618"/>
</dbReference>
<dbReference type="STRING" id="224911.AAV28_03900"/>
<dbReference type="EnsemblBacteria" id="BAC46662">
    <property type="protein sequence ID" value="BAC46662"/>
    <property type="gene ID" value="BAC46662"/>
</dbReference>
<dbReference type="GeneID" id="46488666"/>
<dbReference type="KEGG" id="bja:bll1397"/>
<dbReference type="PATRIC" id="fig|224911.44.peg.820"/>
<dbReference type="eggNOG" id="COG0079">
    <property type="taxonomic scope" value="Bacteria"/>
</dbReference>
<dbReference type="HOGENOM" id="CLU_017584_3_3_5"/>
<dbReference type="InParanoid" id="Q89UL9"/>
<dbReference type="OrthoDB" id="9809616at2"/>
<dbReference type="PhylomeDB" id="Q89UL9"/>
<dbReference type="UniPathway" id="UPA00031">
    <property type="reaction ID" value="UER00012"/>
</dbReference>
<dbReference type="Proteomes" id="UP000002526">
    <property type="component" value="Chromosome"/>
</dbReference>
<dbReference type="GO" id="GO:0004400">
    <property type="term" value="F:histidinol-phosphate transaminase activity"/>
    <property type="evidence" value="ECO:0007669"/>
    <property type="project" value="UniProtKB-UniRule"/>
</dbReference>
<dbReference type="GO" id="GO:0030170">
    <property type="term" value="F:pyridoxal phosphate binding"/>
    <property type="evidence" value="ECO:0007669"/>
    <property type="project" value="InterPro"/>
</dbReference>
<dbReference type="GO" id="GO:0000105">
    <property type="term" value="P:L-histidine biosynthetic process"/>
    <property type="evidence" value="ECO:0007669"/>
    <property type="project" value="UniProtKB-UniRule"/>
</dbReference>
<dbReference type="CDD" id="cd00609">
    <property type="entry name" value="AAT_like"/>
    <property type="match status" value="1"/>
</dbReference>
<dbReference type="Gene3D" id="3.90.1150.10">
    <property type="entry name" value="Aspartate Aminotransferase, domain 1"/>
    <property type="match status" value="1"/>
</dbReference>
<dbReference type="Gene3D" id="3.40.640.10">
    <property type="entry name" value="Type I PLP-dependent aspartate aminotransferase-like (Major domain)"/>
    <property type="match status" value="1"/>
</dbReference>
<dbReference type="HAMAP" id="MF_01023">
    <property type="entry name" value="HisC_aminotrans_2"/>
    <property type="match status" value="1"/>
</dbReference>
<dbReference type="InterPro" id="IPR004839">
    <property type="entry name" value="Aminotransferase_I/II_large"/>
</dbReference>
<dbReference type="InterPro" id="IPR005861">
    <property type="entry name" value="HisP_aminotrans"/>
</dbReference>
<dbReference type="InterPro" id="IPR050106">
    <property type="entry name" value="HistidinolP_aminotransfase"/>
</dbReference>
<dbReference type="InterPro" id="IPR015424">
    <property type="entry name" value="PyrdxlP-dep_Trfase"/>
</dbReference>
<dbReference type="InterPro" id="IPR015421">
    <property type="entry name" value="PyrdxlP-dep_Trfase_major"/>
</dbReference>
<dbReference type="InterPro" id="IPR015422">
    <property type="entry name" value="PyrdxlP-dep_Trfase_small"/>
</dbReference>
<dbReference type="NCBIfam" id="TIGR01141">
    <property type="entry name" value="hisC"/>
    <property type="match status" value="1"/>
</dbReference>
<dbReference type="PANTHER" id="PTHR43643:SF3">
    <property type="entry name" value="HISTIDINOL-PHOSPHATE AMINOTRANSFERASE"/>
    <property type="match status" value="1"/>
</dbReference>
<dbReference type="PANTHER" id="PTHR43643">
    <property type="entry name" value="HISTIDINOL-PHOSPHATE AMINOTRANSFERASE 2"/>
    <property type="match status" value="1"/>
</dbReference>
<dbReference type="Pfam" id="PF00155">
    <property type="entry name" value="Aminotran_1_2"/>
    <property type="match status" value="1"/>
</dbReference>
<dbReference type="SUPFAM" id="SSF53383">
    <property type="entry name" value="PLP-dependent transferases"/>
    <property type="match status" value="1"/>
</dbReference>
<protein>
    <recommendedName>
        <fullName>Histidinol-phosphate aminotransferase 2</fullName>
        <ecNumber>2.6.1.9</ecNumber>
    </recommendedName>
    <alternativeName>
        <fullName>Imidazole acetol-phosphate transaminase 2</fullName>
    </alternativeName>
</protein>
<evidence type="ECO:0000250" key="1"/>
<evidence type="ECO:0000305" key="2"/>